<protein>
    <recommendedName>
        <fullName evidence="1">Phenylalanine--tRNA ligase alpha subunit</fullName>
        <ecNumber evidence="1">6.1.1.20</ecNumber>
    </recommendedName>
    <alternativeName>
        <fullName evidence="1">Phenylalanyl-tRNA synthetase alpha subunit</fullName>
        <shortName evidence="1">PheRS</shortName>
    </alternativeName>
</protein>
<accession>Q255M0</accession>
<organism>
    <name type="scientific">Chlamydia felis (strain Fe/C-56)</name>
    <name type="common">Chlamydophila felis</name>
    <dbReference type="NCBI Taxonomy" id="264202"/>
    <lineage>
        <taxon>Bacteria</taxon>
        <taxon>Pseudomonadati</taxon>
        <taxon>Chlamydiota</taxon>
        <taxon>Chlamydiia</taxon>
        <taxon>Chlamydiales</taxon>
        <taxon>Chlamydiaceae</taxon>
        <taxon>Chlamydia/Chlamydophila group</taxon>
        <taxon>Chlamydia</taxon>
    </lineage>
</organism>
<proteinExistence type="inferred from homology"/>
<dbReference type="EC" id="6.1.1.20" evidence="1"/>
<dbReference type="EMBL" id="AP006861">
    <property type="protein sequence ID" value="BAE81018.1"/>
    <property type="molecule type" value="Genomic_DNA"/>
</dbReference>
<dbReference type="RefSeq" id="WP_011457799.1">
    <property type="nucleotide sequence ID" value="NC_007899.1"/>
</dbReference>
<dbReference type="SMR" id="Q255M0"/>
<dbReference type="STRING" id="264202.CF0246"/>
<dbReference type="KEGG" id="cfe:CF0246"/>
<dbReference type="eggNOG" id="COG0016">
    <property type="taxonomic scope" value="Bacteria"/>
</dbReference>
<dbReference type="HOGENOM" id="CLU_025086_0_1_0"/>
<dbReference type="OrthoDB" id="9800719at2"/>
<dbReference type="Proteomes" id="UP000001260">
    <property type="component" value="Chromosome"/>
</dbReference>
<dbReference type="GO" id="GO:0005737">
    <property type="term" value="C:cytoplasm"/>
    <property type="evidence" value="ECO:0007669"/>
    <property type="project" value="UniProtKB-SubCell"/>
</dbReference>
<dbReference type="GO" id="GO:0005524">
    <property type="term" value="F:ATP binding"/>
    <property type="evidence" value="ECO:0007669"/>
    <property type="project" value="UniProtKB-UniRule"/>
</dbReference>
<dbReference type="GO" id="GO:0000287">
    <property type="term" value="F:magnesium ion binding"/>
    <property type="evidence" value="ECO:0007669"/>
    <property type="project" value="UniProtKB-UniRule"/>
</dbReference>
<dbReference type="GO" id="GO:0004826">
    <property type="term" value="F:phenylalanine-tRNA ligase activity"/>
    <property type="evidence" value="ECO:0007669"/>
    <property type="project" value="UniProtKB-UniRule"/>
</dbReference>
<dbReference type="GO" id="GO:0000049">
    <property type="term" value="F:tRNA binding"/>
    <property type="evidence" value="ECO:0007669"/>
    <property type="project" value="InterPro"/>
</dbReference>
<dbReference type="GO" id="GO:0006432">
    <property type="term" value="P:phenylalanyl-tRNA aminoacylation"/>
    <property type="evidence" value="ECO:0007669"/>
    <property type="project" value="UniProtKB-UniRule"/>
</dbReference>
<dbReference type="CDD" id="cd00496">
    <property type="entry name" value="PheRS_alpha_core"/>
    <property type="match status" value="1"/>
</dbReference>
<dbReference type="Gene3D" id="3.30.930.10">
    <property type="entry name" value="Bira Bifunctional Protein, Domain 2"/>
    <property type="match status" value="1"/>
</dbReference>
<dbReference type="HAMAP" id="MF_00281">
    <property type="entry name" value="Phe_tRNA_synth_alpha1"/>
    <property type="match status" value="1"/>
</dbReference>
<dbReference type="InterPro" id="IPR006195">
    <property type="entry name" value="aa-tRNA-synth_II"/>
</dbReference>
<dbReference type="InterPro" id="IPR045864">
    <property type="entry name" value="aa-tRNA-synth_II/BPL/LPL"/>
</dbReference>
<dbReference type="InterPro" id="IPR004529">
    <property type="entry name" value="Phe-tRNA-synth_IIc_asu"/>
</dbReference>
<dbReference type="InterPro" id="IPR004188">
    <property type="entry name" value="Phe-tRNA_ligase_II_N"/>
</dbReference>
<dbReference type="InterPro" id="IPR022911">
    <property type="entry name" value="Phe_tRNA_ligase_alpha1_bac"/>
</dbReference>
<dbReference type="InterPro" id="IPR002319">
    <property type="entry name" value="Phenylalanyl-tRNA_Synthase"/>
</dbReference>
<dbReference type="InterPro" id="IPR010978">
    <property type="entry name" value="tRNA-bd_arm"/>
</dbReference>
<dbReference type="NCBIfam" id="TIGR00468">
    <property type="entry name" value="pheS"/>
    <property type="match status" value="1"/>
</dbReference>
<dbReference type="PANTHER" id="PTHR11538:SF41">
    <property type="entry name" value="PHENYLALANINE--TRNA LIGASE, MITOCHONDRIAL"/>
    <property type="match status" value="1"/>
</dbReference>
<dbReference type="PANTHER" id="PTHR11538">
    <property type="entry name" value="PHENYLALANYL-TRNA SYNTHETASE"/>
    <property type="match status" value="1"/>
</dbReference>
<dbReference type="Pfam" id="PF02912">
    <property type="entry name" value="Phe_tRNA-synt_N"/>
    <property type="match status" value="1"/>
</dbReference>
<dbReference type="Pfam" id="PF01409">
    <property type="entry name" value="tRNA-synt_2d"/>
    <property type="match status" value="1"/>
</dbReference>
<dbReference type="SUPFAM" id="SSF55681">
    <property type="entry name" value="Class II aaRS and biotin synthetases"/>
    <property type="match status" value="1"/>
</dbReference>
<dbReference type="SUPFAM" id="SSF46589">
    <property type="entry name" value="tRNA-binding arm"/>
    <property type="match status" value="1"/>
</dbReference>
<dbReference type="PROSITE" id="PS50862">
    <property type="entry name" value="AA_TRNA_LIGASE_II"/>
    <property type="match status" value="1"/>
</dbReference>
<sequence length="341" mass="38994">MTIQEELEATKQQFCIELNQVNSSKDLFDLKVRYLGKKGLFRCFADKLRECPLDQKALMGASINECKTYIEEQIREKNDSILLAEESAEFLKEKIDITLPGESHCPGGKHIVKKVLDDVVDIFICLGFCVREAPNIESEENNFSLLNFEEDHPARQMHDTFYLDGKTVLRTHTSNVQVRELSKGQPPIKVVAPGLCFRNEDISARSHVIFHQVEAFYLDRDVTLSDLTEMLTEFYHTFFKRKIELRLRHSYFPFVEPGIEVDVSCECRGSGCSLCKHTGWLEVAGAGMIHPQVLRNSGIDPEIYTGYAVGMGIERLAMLKHGISDIRLFCENDLRFLQQFS</sequence>
<comment type="catalytic activity">
    <reaction evidence="1">
        <text>tRNA(Phe) + L-phenylalanine + ATP = L-phenylalanyl-tRNA(Phe) + AMP + diphosphate + H(+)</text>
        <dbReference type="Rhea" id="RHEA:19413"/>
        <dbReference type="Rhea" id="RHEA-COMP:9668"/>
        <dbReference type="Rhea" id="RHEA-COMP:9699"/>
        <dbReference type="ChEBI" id="CHEBI:15378"/>
        <dbReference type="ChEBI" id="CHEBI:30616"/>
        <dbReference type="ChEBI" id="CHEBI:33019"/>
        <dbReference type="ChEBI" id="CHEBI:58095"/>
        <dbReference type="ChEBI" id="CHEBI:78442"/>
        <dbReference type="ChEBI" id="CHEBI:78531"/>
        <dbReference type="ChEBI" id="CHEBI:456215"/>
        <dbReference type="EC" id="6.1.1.20"/>
    </reaction>
</comment>
<comment type="cofactor">
    <cofactor evidence="1">
        <name>Mg(2+)</name>
        <dbReference type="ChEBI" id="CHEBI:18420"/>
    </cofactor>
    <text evidence="1">Binds 2 magnesium ions per tetramer.</text>
</comment>
<comment type="subunit">
    <text evidence="1">Tetramer of two alpha and two beta subunits.</text>
</comment>
<comment type="subcellular location">
    <subcellularLocation>
        <location evidence="1">Cytoplasm</location>
    </subcellularLocation>
</comment>
<comment type="similarity">
    <text evidence="1">Belongs to the class-II aminoacyl-tRNA synthetase family. Phe-tRNA synthetase alpha subunit type 1 subfamily.</text>
</comment>
<evidence type="ECO:0000255" key="1">
    <source>
        <dbReference type="HAMAP-Rule" id="MF_00281"/>
    </source>
</evidence>
<name>SYFA_CHLFF</name>
<feature type="chain" id="PRO_1000006811" description="Phenylalanine--tRNA ligase alpha subunit">
    <location>
        <begin position="1"/>
        <end position="341"/>
    </location>
</feature>
<feature type="binding site" evidence="1">
    <location>
        <position position="256"/>
    </location>
    <ligand>
        <name>Mg(2+)</name>
        <dbReference type="ChEBI" id="CHEBI:18420"/>
        <note>shared with beta subunit</note>
    </ligand>
</feature>
<reference key="1">
    <citation type="journal article" date="2006" name="DNA Res.">
        <title>Genome sequence of the cat pathogen, Chlamydophila felis.</title>
        <authorList>
            <person name="Azuma Y."/>
            <person name="Hirakawa H."/>
            <person name="Yamashita A."/>
            <person name="Cai Y."/>
            <person name="Rahman M.A."/>
            <person name="Suzuki H."/>
            <person name="Mitaku S."/>
            <person name="Toh H."/>
            <person name="Goto S."/>
            <person name="Murakami T."/>
            <person name="Sugi K."/>
            <person name="Hayashi H."/>
            <person name="Fukushi H."/>
            <person name="Hattori M."/>
            <person name="Kuhara S."/>
            <person name="Shirai M."/>
        </authorList>
    </citation>
    <scope>NUCLEOTIDE SEQUENCE [LARGE SCALE GENOMIC DNA]</scope>
    <source>
        <strain>Fe/C-56</strain>
    </source>
</reference>
<keyword id="KW-0030">Aminoacyl-tRNA synthetase</keyword>
<keyword id="KW-0067">ATP-binding</keyword>
<keyword id="KW-0963">Cytoplasm</keyword>
<keyword id="KW-0436">Ligase</keyword>
<keyword id="KW-0460">Magnesium</keyword>
<keyword id="KW-0479">Metal-binding</keyword>
<keyword id="KW-0547">Nucleotide-binding</keyword>
<keyword id="KW-0648">Protein biosynthesis</keyword>
<gene>
    <name evidence="1" type="primary">pheS</name>
    <name type="ordered locus">CF0246</name>
</gene>